<name>BCAT1_HUMLU</name>
<organism>
    <name type="scientific">Humulus lupulus</name>
    <name type="common">European hop</name>
    <dbReference type="NCBI Taxonomy" id="3486"/>
    <lineage>
        <taxon>Eukaryota</taxon>
        <taxon>Viridiplantae</taxon>
        <taxon>Streptophyta</taxon>
        <taxon>Embryophyta</taxon>
        <taxon>Tracheophyta</taxon>
        <taxon>Spermatophyta</taxon>
        <taxon>Magnoliopsida</taxon>
        <taxon>eudicotyledons</taxon>
        <taxon>Gunneridae</taxon>
        <taxon>Pentapetalae</taxon>
        <taxon>rosids</taxon>
        <taxon>fabids</taxon>
        <taxon>Rosales</taxon>
        <taxon>Cannabaceae</taxon>
        <taxon>Humulus</taxon>
    </lineage>
</organism>
<protein>
    <recommendedName>
        <fullName evidence="5">Branched-chain amino acid aminotransferase 1, mitochondrial</fullName>
        <shortName evidence="5">HlBCAT1</shortName>
        <ecNumber evidence="4">2.6.1.42</ecNumber>
    </recommendedName>
</protein>
<gene>
    <name evidence="5" type="primary">BCAT1</name>
</gene>
<comment type="function">
    <text evidence="4">Converts 2-oxo acids to branched-chain amino acids (BCAA). Shows no kinetic preferences corresponding to anabolic or catabolic functions, but likely involved in BCAA catabolism.</text>
</comment>
<comment type="catalytic activity">
    <reaction evidence="4">
        <text>L-isoleucine + 2-oxoglutarate = (S)-3-methyl-2-oxopentanoate + L-glutamate</text>
        <dbReference type="Rhea" id="RHEA:24801"/>
        <dbReference type="ChEBI" id="CHEBI:16810"/>
        <dbReference type="ChEBI" id="CHEBI:29985"/>
        <dbReference type="ChEBI" id="CHEBI:35146"/>
        <dbReference type="ChEBI" id="CHEBI:58045"/>
        <dbReference type="EC" id="2.6.1.42"/>
    </reaction>
</comment>
<comment type="catalytic activity">
    <reaction evidence="4">
        <text>L-leucine + 2-oxoglutarate = 4-methyl-2-oxopentanoate + L-glutamate</text>
        <dbReference type="Rhea" id="RHEA:18321"/>
        <dbReference type="ChEBI" id="CHEBI:16810"/>
        <dbReference type="ChEBI" id="CHEBI:17865"/>
        <dbReference type="ChEBI" id="CHEBI:29985"/>
        <dbReference type="ChEBI" id="CHEBI:57427"/>
        <dbReference type="EC" id="2.6.1.42"/>
    </reaction>
</comment>
<comment type="catalytic activity">
    <reaction evidence="4">
        <text>L-valine + 2-oxoglutarate = 3-methyl-2-oxobutanoate + L-glutamate</text>
        <dbReference type="Rhea" id="RHEA:24813"/>
        <dbReference type="ChEBI" id="CHEBI:11851"/>
        <dbReference type="ChEBI" id="CHEBI:16810"/>
        <dbReference type="ChEBI" id="CHEBI:29985"/>
        <dbReference type="ChEBI" id="CHEBI:57762"/>
        <dbReference type="EC" id="2.6.1.42"/>
    </reaction>
</comment>
<comment type="cofactor">
    <cofactor evidence="3">
        <name>pyridoxal 5'-phosphate</name>
        <dbReference type="ChEBI" id="CHEBI:597326"/>
    </cofactor>
</comment>
<comment type="biophysicochemical properties">
    <kinetics>
        <KM evidence="4">720 uM for glutamate</KM>
        <KM evidence="4">35 uM for ketoisocarpoate</KM>
        <KM evidence="4">99 uM for ketoisomethylvalerate</KM>
        <KM evidence="4">99 uM for ketoisovalerate</KM>
        <KM evidence="4">30 uM for 2-oxoglutarate</KM>
        <KM evidence="4">40 uM for leucine</KM>
        <KM evidence="4">230 uM for isoleucine</KM>
        <KM evidence="4">340 uM for valine</KM>
        <Vmax evidence="4">5.59 umol/min/mg enzyme with glutamate as substrate</Vmax>
        <Vmax evidence="4">4.5 umol/min/mg enzyme with ketoisocarpoate as substrate</Vmax>
        <Vmax evidence="4">2.95 umol/min/mg enzyme with ketoisomethylvalerate as substrate</Vmax>
        <Vmax evidence="4">4.23 umol/min/mg enzyme with ketoisovalerate as substrate</Vmax>
        <Vmax evidence="4">4.5 umol/min/mg enzyme with 2-oxoglutarate as substrate</Vmax>
        <Vmax evidence="4">4.84 umol/min/mg enzyme with leucine as substrate</Vmax>
        <Vmax evidence="4">19.4 umol/min/mg enzyme with isoleucine as substrate</Vmax>
        <Vmax evidence="4">12.6 umol/min/mg enzyme with valine as substrate</Vmax>
    </kinetics>
</comment>
<comment type="pathway">
    <text evidence="6">Amino-acid biosynthesis; L-isoleucine biosynthesis; L-isoleucine from 2-oxobutanoate: step 4/4.</text>
</comment>
<comment type="pathway">
    <text evidence="6">Amino-acid biosynthesis; L-leucine biosynthesis; L-leucine from 3-methyl-2-oxobutanoate: step 4/4.</text>
</comment>
<comment type="pathway">
    <text evidence="6">Amino-acid biosynthesis; L-valine biosynthesis; L-valine from pyruvate: step 4/4.</text>
</comment>
<comment type="subcellular location">
    <subcellularLocation>
        <location evidence="4">Mitochondrion</location>
    </subcellularLocation>
</comment>
<comment type="tissue specificity">
    <text evidence="4">Expressed specifically in lupulin glands.</text>
</comment>
<comment type="miscellaneous">
    <text evidence="6">Branched-chain amino acids are synthesized in chloroplasts, whereas the degradation takes place in mitochondria.</text>
</comment>
<comment type="similarity">
    <text evidence="6">Belongs to the class-IV pyridoxal-phosphate-dependent aminotransferase family.</text>
</comment>
<keyword id="KW-0028">Amino-acid biosynthesis</keyword>
<keyword id="KW-0032">Aminotransferase</keyword>
<keyword id="KW-0100">Branched-chain amino acid biosynthesis</keyword>
<keyword id="KW-0496">Mitochondrion</keyword>
<keyword id="KW-0663">Pyridoxal phosphate</keyword>
<keyword id="KW-0808">Transferase</keyword>
<keyword id="KW-0809">Transit peptide</keyword>
<evidence type="ECO:0000250" key="1">
    <source>
        <dbReference type="UniProtKB" id="P19938"/>
    </source>
</evidence>
<evidence type="ECO:0000255" key="2"/>
<evidence type="ECO:0000255" key="3">
    <source>
        <dbReference type="RuleBase" id="RU004516"/>
    </source>
</evidence>
<evidence type="ECO:0000269" key="4">
    <source>
    </source>
</evidence>
<evidence type="ECO:0000303" key="5">
    <source>
    </source>
</evidence>
<evidence type="ECO:0000305" key="6"/>
<dbReference type="EC" id="2.6.1.42" evidence="4"/>
<dbReference type="EMBL" id="JQ063073">
    <property type="protein sequence ID" value="AFU07634.1"/>
    <property type="molecule type" value="mRNA"/>
</dbReference>
<dbReference type="SMR" id="K7QKH1"/>
<dbReference type="UniPathway" id="UPA00047">
    <property type="reaction ID" value="UER00058"/>
</dbReference>
<dbReference type="UniPathway" id="UPA00048">
    <property type="reaction ID" value="UER00073"/>
</dbReference>
<dbReference type="UniPathway" id="UPA00049">
    <property type="reaction ID" value="UER00062"/>
</dbReference>
<dbReference type="GO" id="GO:0005739">
    <property type="term" value="C:mitochondrion"/>
    <property type="evidence" value="ECO:0007669"/>
    <property type="project" value="UniProtKB-SubCell"/>
</dbReference>
<dbReference type="GO" id="GO:0052656">
    <property type="term" value="F:L-isoleucine-2-oxoglutarate transaminase activity"/>
    <property type="evidence" value="ECO:0007669"/>
    <property type="project" value="RHEA"/>
</dbReference>
<dbReference type="GO" id="GO:0052654">
    <property type="term" value="F:L-leucine-2-oxoglutarate transaminase activity"/>
    <property type="evidence" value="ECO:0007669"/>
    <property type="project" value="RHEA"/>
</dbReference>
<dbReference type="GO" id="GO:0052655">
    <property type="term" value="F:L-valine-2-oxoglutarate transaminase activity"/>
    <property type="evidence" value="ECO:0007669"/>
    <property type="project" value="RHEA"/>
</dbReference>
<dbReference type="GO" id="GO:0009097">
    <property type="term" value="P:isoleucine biosynthetic process"/>
    <property type="evidence" value="ECO:0007669"/>
    <property type="project" value="UniProtKB-UniPathway"/>
</dbReference>
<dbReference type="GO" id="GO:0009098">
    <property type="term" value="P:L-leucine biosynthetic process"/>
    <property type="evidence" value="ECO:0007669"/>
    <property type="project" value="UniProtKB-UniPathway"/>
</dbReference>
<dbReference type="GO" id="GO:0009099">
    <property type="term" value="P:L-valine biosynthetic process"/>
    <property type="evidence" value="ECO:0007669"/>
    <property type="project" value="UniProtKB-UniPathway"/>
</dbReference>
<dbReference type="CDD" id="cd01557">
    <property type="entry name" value="BCAT_beta_family"/>
    <property type="match status" value="1"/>
</dbReference>
<dbReference type="FunFam" id="3.20.10.10:FF:000003">
    <property type="entry name" value="Branched-chain-amino-acid aminotransferase"/>
    <property type="match status" value="1"/>
</dbReference>
<dbReference type="FunFam" id="3.30.470.10:FF:000003">
    <property type="entry name" value="Branched-chain-amino-acid aminotransferase"/>
    <property type="match status" value="1"/>
</dbReference>
<dbReference type="Gene3D" id="3.30.470.10">
    <property type="match status" value="1"/>
</dbReference>
<dbReference type="Gene3D" id="3.20.10.10">
    <property type="entry name" value="D-amino Acid Aminotransferase, subunit A, domain 2"/>
    <property type="match status" value="1"/>
</dbReference>
<dbReference type="InterPro" id="IPR001544">
    <property type="entry name" value="Aminotrans_IV"/>
</dbReference>
<dbReference type="InterPro" id="IPR018300">
    <property type="entry name" value="Aminotrans_IV_CS"/>
</dbReference>
<dbReference type="InterPro" id="IPR036038">
    <property type="entry name" value="Aminotransferase-like"/>
</dbReference>
<dbReference type="InterPro" id="IPR005786">
    <property type="entry name" value="B_amino_transII"/>
</dbReference>
<dbReference type="InterPro" id="IPR043132">
    <property type="entry name" value="BCAT-like_C"/>
</dbReference>
<dbReference type="InterPro" id="IPR043131">
    <property type="entry name" value="BCAT-like_N"/>
</dbReference>
<dbReference type="InterPro" id="IPR033939">
    <property type="entry name" value="BCAT_family"/>
</dbReference>
<dbReference type="NCBIfam" id="TIGR01123">
    <property type="entry name" value="ilvE_II"/>
    <property type="match status" value="1"/>
</dbReference>
<dbReference type="NCBIfam" id="NF009897">
    <property type="entry name" value="PRK13357.1"/>
    <property type="match status" value="1"/>
</dbReference>
<dbReference type="PANTHER" id="PTHR42825">
    <property type="entry name" value="AMINO ACID AMINOTRANSFERASE"/>
    <property type="match status" value="1"/>
</dbReference>
<dbReference type="PANTHER" id="PTHR42825:SF29">
    <property type="entry name" value="BRANCHED-CHAIN-AMINO-ACID AMINOTRANSFERASE"/>
    <property type="match status" value="1"/>
</dbReference>
<dbReference type="Pfam" id="PF01063">
    <property type="entry name" value="Aminotran_4"/>
    <property type="match status" value="1"/>
</dbReference>
<dbReference type="PIRSF" id="PIRSF006468">
    <property type="entry name" value="BCAT1"/>
    <property type="match status" value="1"/>
</dbReference>
<dbReference type="SUPFAM" id="SSF56752">
    <property type="entry name" value="D-aminoacid aminotransferase-like PLP-dependent enzymes"/>
    <property type="match status" value="1"/>
</dbReference>
<dbReference type="PROSITE" id="PS00770">
    <property type="entry name" value="AA_TRANSFER_CLASS_4"/>
    <property type="match status" value="1"/>
</dbReference>
<proteinExistence type="evidence at protein level"/>
<feature type="transit peptide" description="Mitochondrion" evidence="2">
    <location>
        <begin position="1"/>
        <end position="34"/>
    </location>
</feature>
<feature type="chain" id="PRO_0000439267" description="Branched-chain amino acid aminotransferase 1, mitochondrial" evidence="2">
    <location>
        <begin position="35"/>
        <end position="393"/>
    </location>
</feature>
<feature type="active site" description="Proton acceptor" evidence="1">
    <location>
        <position position="240"/>
    </location>
</feature>
<feature type="binding site" evidence="1">
    <location>
        <position position="138"/>
    </location>
    <ligand>
        <name>pyridoxal 5'-phosphate</name>
        <dbReference type="ChEBI" id="CHEBI:597326"/>
    </ligand>
</feature>
<feature type="binding site" evidence="1">
    <location>
        <position position="276"/>
    </location>
    <ligand>
        <name>pyridoxal 5'-phosphate</name>
        <dbReference type="ChEBI" id="CHEBI:597326"/>
    </ligand>
</feature>
<feature type="modified residue" description="N6-(pyridoxal phosphate)lysine" evidence="1">
    <location>
        <position position="240"/>
    </location>
</feature>
<reference key="1">
    <citation type="journal article" date="2013" name="BMC Plant Biol.">
        <title>Transcriptome analysis of bitter acid biosynthesis and precursor pathways in hop (Humulus lupulus).</title>
        <authorList>
            <person name="Clark S.M."/>
            <person name="Vaitheeswaran V."/>
            <person name="Ambrose S.J."/>
            <person name="Purves R.W."/>
            <person name="Page J.E."/>
        </authorList>
    </citation>
    <scope>NUCLEOTIDE SEQUENCE [LARGE SCALE MRNA]</scope>
    <scope>TISSUE SPECIFICITY</scope>
    <scope>FUNCTION</scope>
    <scope>CATALYTIC ACTIVITY</scope>
    <scope>BIOPHYSICOCHEMICAL PROPERTIES</scope>
    <scope>SUBCELLULAR LOCATION</scope>
</reference>
<sequence>MIHRGLWLHNLVQSYRVGSSSSSSTLFKLVYRYNSSTSLAKSSLKQSCELSCKSNTEPSNMDWDKLGFKLMPTDYVYSMKCSNEGNFEQGRLELHGNIELSPAAAVLNYGQGIFEGTKAYRKEDGSLLLFRPDQNGVRMRIGAERMCMPSPSVDQFVDAVKQTAIANRRWVPPSGKGSLYIRPLLMGTGAVLGVAPAPQYTFLAYASPVGNYFKEGLAPLRLYVEDEFDRASPGGTGFVKTIGNYSRCLAALSRAKNKGFSDVLFLDSVHKKYVEELSSCNIFIVQGNQISTPAANGTILSGVTRSSIIEIARDHGFKVEERKIAVDELMEAEEVFCTGTAVGVASVGSITYHNKRVEFKTGSQSVSQKFYSTLIGIQTGVVEDKKGWIVEID</sequence>
<accession>K7QKH1</accession>